<keyword id="KW-0058">Aromatic hydrocarbons catabolism</keyword>
<keyword id="KW-0378">Hydrolase</keyword>
<keyword id="KW-0479">Metal-binding</keyword>
<keyword id="KW-0670">Pyruvate</keyword>
<proteinExistence type="evidence at protein level"/>
<protein>
    <recommendedName>
        <fullName evidence="6">Maleylpyruvate hydrolase</fullName>
        <shortName evidence="6">MPH11</shortName>
        <ecNumber evidence="2 4">3.7.1.23</ecNumber>
    </recommendedName>
</protein>
<gene>
    <name evidence="5" type="primary">hbzF</name>
</gene>
<feature type="chain" id="PRO_0000452282" description="Maleylpyruvate hydrolase">
    <location>
        <begin position="1"/>
        <end position="287"/>
    </location>
</feature>
<feature type="binding site" evidence="1">
    <location>
        <position position="143"/>
    </location>
    <ligand>
        <name>a divalent metal cation</name>
        <dbReference type="ChEBI" id="CHEBI:60240"/>
    </ligand>
</feature>
<feature type="binding site" evidence="1">
    <location>
        <position position="145"/>
    </location>
    <ligand>
        <name>a divalent metal cation</name>
        <dbReference type="ChEBI" id="CHEBI:60240"/>
    </ligand>
</feature>
<feature type="binding site" evidence="1">
    <location>
        <position position="174"/>
    </location>
    <ligand>
        <name>a divalent metal cation</name>
        <dbReference type="ChEBI" id="CHEBI:60240"/>
    </ligand>
</feature>
<dbReference type="EC" id="3.7.1.23" evidence="2 4"/>
<dbReference type="EMBL" id="DQ394580">
    <property type="protein sequence ID" value="ABD64512.1"/>
    <property type="molecule type" value="Genomic_DNA"/>
</dbReference>
<dbReference type="SMR" id="Q0QFQ3"/>
<dbReference type="KEGG" id="ag:ABD64512"/>
<dbReference type="BioCyc" id="MetaCyc:MONOMER-14773"/>
<dbReference type="BRENDA" id="3.7.1.23">
    <property type="organism ID" value="5088"/>
</dbReference>
<dbReference type="GO" id="GO:0102054">
    <property type="term" value="F:maleylpyruvate hydrolase activity"/>
    <property type="evidence" value="ECO:0007669"/>
    <property type="project" value="UniProtKB-EC"/>
</dbReference>
<dbReference type="GO" id="GO:0046872">
    <property type="term" value="F:metal ion binding"/>
    <property type="evidence" value="ECO:0007669"/>
    <property type="project" value="UniProtKB-KW"/>
</dbReference>
<dbReference type="GO" id="GO:0009056">
    <property type="term" value="P:catabolic process"/>
    <property type="evidence" value="ECO:0007669"/>
    <property type="project" value="UniProtKB-KW"/>
</dbReference>
<dbReference type="Gene3D" id="3.90.850.10">
    <property type="entry name" value="Fumarylacetoacetase-like, C-terminal domain"/>
    <property type="match status" value="1"/>
</dbReference>
<dbReference type="InterPro" id="IPR011234">
    <property type="entry name" value="Fumarylacetoacetase-like_C"/>
</dbReference>
<dbReference type="InterPro" id="IPR036663">
    <property type="entry name" value="Fumarylacetoacetase_C_sf"/>
</dbReference>
<dbReference type="PANTHER" id="PTHR11820">
    <property type="entry name" value="ACYLPYRUVASE"/>
    <property type="match status" value="1"/>
</dbReference>
<dbReference type="PANTHER" id="PTHR11820:SF112">
    <property type="entry name" value="FUMARYLACETOACETATE HYDROLASE FAMILY PROTEIN (AFU_ORTHOLOGUE AFUA_1G02370)-RELATED"/>
    <property type="match status" value="1"/>
</dbReference>
<dbReference type="Pfam" id="PF01557">
    <property type="entry name" value="FAA_hydrolase"/>
    <property type="match status" value="1"/>
</dbReference>
<dbReference type="SUPFAM" id="SSF56529">
    <property type="entry name" value="FAH"/>
    <property type="match status" value="1"/>
</dbReference>
<organism>
    <name type="scientific">Aquipseudomonas alcaligenes</name>
    <name type="common">Pseudomonas alcaligenes</name>
    <dbReference type="NCBI Taxonomy" id="43263"/>
    <lineage>
        <taxon>Bacteria</taxon>
        <taxon>Pseudomonadati</taxon>
        <taxon>Pseudomonadota</taxon>
        <taxon>Gammaproteobacteria</taxon>
        <taxon>Pseudomonadales</taxon>
        <taxon>Pseudomonadaceae</taxon>
        <taxon>Aquipseudomonas</taxon>
    </lineage>
</organism>
<evidence type="ECO:0000250" key="1">
    <source>
        <dbReference type="UniProtKB" id="Q6P587"/>
    </source>
</evidence>
<evidence type="ECO:0000269" key="2">
    <source>
    </source>
</evidence>
<evidence type="ECO:0000269" key="3">
    <source>
    </source>
</evidence>
<evidence type="ECO:0000269" key="4">
    <source>
    </source>
</evidence>
<evidence type="ECO:0000303" key="5">
    <source>
    </source>
</evidence>
<evidence type="ECO:0000303" key="6">
    <source>
    </source>
</evidence>
<evidence type="ECO:0000305" key="7"/>
<sequence length="287" mass="31208">MKICRFNENRLGVVDGDEVLDVTEALSVLPSYEYPLPGYDPLIKHLDALLARIETLIKDAPRILLADVRLLSPVANPGKIIAAPINYTRHLQEVLADSAINNGVASFTQHIKKSGLFLKANSSLAGAGEGVALSHQDRRNDHEVELAIVIGKTARNVPREKSLEYVAGYCIGIDMTVRGPEERSFRKSPDSYTILGPWLVTRDEIDSPGELQMSLKVNGEVRQNANTSDLILGVEELVEFASSFYTLHPGDVIISGTPEGVGPVNPGDAMLAEIERIGTMTIAIRSV</sequence>
<accession>Q0QFQ3</accession>
<reference key="1">
    <citation type="journal article" date="2007" name="Res. Microbiol.">
        <title>Characterization of hbzE-encoded gentisate 1,2-dioxygenase from Pseudomonas alcaligenes NCIMB 9867.</title>
        <authorList>
            <person name="Yeo C.C."/>
            <person name="Tan C.L."/>
            <person name="Gao X."/>
            <person name="Zhao B."/>
            <person name="Poh C.L."/>
        </authorList>
    </citation>
    <scope>NUCLEOTIDE SEQUENCE [GENOMIC DNA]</scope>
    <source>
        <strain>NCIMB 9867 / P25X</strain>
    </source>
</reference>
<reference key="2">
    <citation type="journal article" date="1980" name="J. Bacteriol.">
        <title>Purification and some properties of maleylpyruvate hydrolase and fumarylpyruvate hydrolase from Pseudomonas alcaligenes.</title>
        <authorList>
            <person name="Bayly R.C."/>
            <person name="Chapman P.J."/>
            <person name="Dagley S."/>
            <person name="Di Berardino D."/>
        </authorList>
    </citation>
    <scope>FUNCTION</scope>
    <scope>CATALYTIC ACTIVITY</scope>
    <scope>ACTIVITY REGULATION</scope>
    <scope>BIOPHYSICOCHEMICAL PROPERTIES</scope>
    <source>
        <strain>NCIMB 9867 / P25X</strain>
    </source>
</reference>
<reference key="3">
    <citation type="journal article" date="2013" name="Appl. Environ. Microbiol.">
        <title>HbzF catalyzes direct hydrolysis of maleylpyruvate in the gentisate pathway of Pseudomonas alcaligenes NCIMB 9867.</title>
        <authorList>
            <person name="Liu K."/>
            <person name="Liu T.T."/>
            <person name="Zhou N.Y."/>
        </authorList>
    </citation>
    <scope>FUNCTION</scope>
    <scope>CATALYTIC ACTIVITY</scope>
    <scope>ACTIVITY REGULATION</scope>
    <scope>BIOPHYSICOCHEMICAL PROPERTIES</scope>
    <scope>SUBUNIT</scope>
    <scope>INDUCTION</scope>
    <source>
        <strain>NCIMB 9867 / P25X</strain>
    </source>
</reference>
<reference key="4">
    <citation type="journal article" date="2015" name="Appl. Environ. Microbiol.">
        <title>Identification of a specific maleate hydratase in the direct hydrolysis route of the gentisate pathway.</title>
        <authorList>
            <person name="Liu K."/>
            <person name="Xu Y."/>
            <person name="Zhou N.Y."/>
        </authorList>
    </citation>
    <scope>DISRUPTION PHENOTYPE</scope>
    <source>
        <strain>NCIMB 9867 / P25X</strain>
    </source>
</reference>
<comment type="function">
    <text evidence="2 4">Involved in the degradation of gentisate (PubMed:23204427, PubMed:7400101). Catalyzes the hydrolysis of 3-maleylpyruvate, the ring-cleavage product of gentisate (PubMed:23204427, PubMed:7400101).</text>
</comment>
<comment type="catalytic activity">
    <reaction evidence="2 4">
        <text>3-maleylpyruvate + H2O = maleate + pyruvate + H(+)</text>
        <dbReference type="Rhea" id="RHEA:47956"/>
        <dbReference type="ChEBI" id="CHEBI:15361"/>
        <dbReference type="ChEBI" id="CHEBI:15377"/>
        <dbReference type="ChEBI" id="CHEBI:15378"/>
        <dbReference type="ChEBI" id="CHEBI:16727"/>
        <dbReference type="ChEBI" id="CHEBI:30780"/>
        <dbReference type="EC" id="3.7.1.23"/>
    </reaction>
    <physiologicalReaction direction="left-to-right" evidence="2 4">
        <dbReference type="Rhea" id="RHEA:47957"/>
    </physiologicalReaction>
</comment>
<comment type="activity regulation">
    <text evidence="2 4">Activated by Mn(2+) (PubMed:23204427, PubMed:7400101). Inhibited by Ni(2+), Cd(2+), Co(2+) or Cu(2+) (PubMed:23204427).</text>
</comment>
<comment type="biophysicochemical properties">
    <kinetics>
        <KM evidence="2">19.9 uM for maleylpyruvate</KM>
    </kinetics>
    <phDependence>
        <text evidence="2 4">Optimum pH is 7.2-7.7 (PubMed:7400101). Optimum pH is 7.6 (PubMed:23204427).</text>
    </phDependence>
    <temperatureDependence>
        <text evidence="2">Optimum temperature is 30 degrees Celsius.</text>
    </temperatureDependence>
</comment>
<comment type="subunit">
    <text evidence="2">Homodimer.</text>
</comment>
<comment type="induction">
    <text evidence="2">Induced by 3-hydroxybenzoate.</text>
</comment>
<comment type="disruption phenotype">
    <text evidence="3">Disruption mutant can still grow on gentisate.</text>
</comment>
<comment type="similarity">
    <text evidence="7">Belongs to the FAH family.</text>
</comment>
<name>HBZF_AQUAC</name>